<organism>
    <name type="scientific">Listeria monocytogenes serotype 4b (strain F2365)</name>
    <dbReference type="NCBI Taxonomy" id="265669"/>
    <lineage>
        <taxon>Bacteria</taxon>
        <taxon>Bacillati</taxon>
        <taxon>Bacillota</taxon>
        <taxon>Bacilli</taxon>
        <taxon>Bacillales</taxon>
        <taxon>Listeriaceae</taxon>
        <taxon>Listeria</taxon>
    </lineage>
</organism>
<keyword id="KW-0066">ATP synthesis</keyword>
<keyword id="KW-0067">ATP-binding</keyword>
<keyword id="KW-1003">Cell membrane</keyword>
<keyword id="KW-0139">CF(1)</keyword>
<keyword id="KW-0375">Hydrogen ion transport</keyword>
<keyword id="KW-0406">Ion transport</keyword>
<keyword id="KW-0472">Membrane</keyword>
<keyword id="KW-0547">Nucleotide-binding</keyword>
<keyword id="KW-1278">Translocase</keyword>
<keyword id="KW-0813">Transport</keyword>
<evidence type="ECO:0000255" key="1">
    <source>
        <dbReference type="HAMAP-Rule" id="MF_01346"/>
    </source>
</evidence>
<comment type="function">
    <text evidence="1">Produces ATP from ADP in the presence of a proton gradient across the membrane. The alpha chain is a regulatory subunit.</text>
</comment>
<comment type="catalytic activity">
    <reaction evidence="1">
        <text>ATP + H2O + 4 H(+)(in) = ADP + phosphate + 5 H(+)(out)</text>
        <dbReference type="Rhea" id="RHEA:57720"/>
        <dbReference type="ChEBI" id="CHEBI:15377"/>
        <dbReference type="ChEBI" id="CHEBI:15378"/>
        <dbReference type="ChEBI" id="CHEBI:30616"/>
        <dbReference type="ChEBI" id="CHEBI:43474"/>
        <dbReference type="ChEBI" id="CHEBI:456216"/>
        <dbReference type="EC" id="7.1.2.2"/>
    </reaction>
</comment>
<comment type="subunit">
    <text evidence="1">F-type ATPases have 2 components, CF(1) - the catalytic core - and CF(0) - the membrane proton channel. CF(1) has five subunits: alpha(3), beta(3), gamma(1), delta(1), epsilon(1). CF(0) has three main subunits: a(1), b(2) and c(9-12). The alpha and beta chains form an alternating ring which encloses part of the gamma chain. CF(1) is attached to CF(0) by a central stalk formed by the gamma and epsilon chains, while a peripheral stalk is formed by the delta and b chains.</text>
</comment>
<comment type="subcellular location">
    <subcellularLocation>
        <location evidence="1">Cell membrane</location>
        <topology evidence="1">Peripheral membrane protein</topology>
    </subcellularLocation>
</comment>
<comment type="similarity">
    <text evidence="1">Belongs to the ATPase alpha/beta chains family.</text>
</comment>
<proteinExistence type="inferred from homology"/>
<dbReference type="EC" id="7.1.2.2" evidence="1"/>
<dbReference type="EMBL" id="AE017262">
    <property type="protein sequence ID" value="AAT05269.1"/>
    <property type="molecule type" value="Genomic_DNA"/>
</dbReference>
<dbReference type="SMR" id="Q71WP7"/>
<dbReference type="KEGG" id="lmf:LMOf2365_2504"/>
<dbReference type="HOGENOM" id="CLU_010091_2_1_9"/>
<dbReference type="GO" id="GO:0005886">
    <property type="term" value="C:plasma membrane"/>
    <property type="evidence" value="ECO:0007669"/>
    <property type="project" value="UniProtKB-SubCell"/>
</dbReference>
<dbReference type="GO" id="GO:0045259">
    <property type="term" value="C:proton-transporting ATP synthase complex"/>
    <property type="evidence" value="ECO:0007669"/>
    <property type="project" value="UniProtKB-KW"/>
</dbReference>
<dbReference type="GO" id="GO:0043531">
    <property type="term" value="F:ADP binding"/>
    <property type="evidence" value="ECO:0007669"/>
    <property type="project" value="TreeGrafter"/>
</dbReference>
<dbReference type="GO" id="GO:0005524">
    <property type="term" value="F:ATP binding"/>
    <property type="evidence" value="ECO:0007669"/>
    <property type="project" value="UniProtKB-UniRule"/>
</dbReference>
<dbReference type="GO" id="GO:0046933">
    <property type="term" value="F:proton-transporting ATP synthase activity, rotational mechanism"/>
    <property type="evidence" value="ECO:0007669"/>
    <property type="project" value="UniProtKB-UniRule"/>
</dbReference>
<dbReference type="CDD" id="cd18113">
    <property type="entry name" value="ATP-synt_F1_alpha_C"/>
    <property type="match status" value="1"/>
</dbReference>
<dbReference type="CDD" id="cd18116">
    <property type="entry name" value="ATP-synt_F1_alpha_N"/>
    <property type="match status" value="1"/>
</dbReference>
<dbReference type="CDD" id="cd01132">
    <property type="entry name" value="F1-ATPase_alpha_CD"/>
    <property type="match status" value="1"/>
</dbReference>
<dbReference type="FunFam" id="1.20.150.20:FF:000001">
    <property type="entry name" value="ATP synthase subunit alpha"/>
    <property type="match status" value="1"/>
</dbReference>
<dbReference type="FunFam" id="2.40.30.20:FF:000001">
    <property type="entry name" value="ATP synthase subunit alpha"/>
    <property type="match status" value="1"/>
</dbReference>
<dbReference type="FunFam" id="3.40.50.300:FF:000002">
    <property type="entry name" value="ATP synthase subunit alpha"/>
    <property type="match status" value="1"/>
</dbReference>
<dbReference type="Gene3D" id="2.40.30.20">
    <property type="match status" value="1"/>
</dbReference>
<dbReference type="Gene3D" id="1.20.150.20">
    <property type="entry name" value="ATP synthase alpha/beta chain, C-terminal domain"/>
    <property type="match status" value="1"/>
</dbReference>
<dbReference type="Gene3D" id="3.40.50.300">
    <property type="entry name" value="P-loop containing nucleotide triphosphate hydrolases"/>
    <property type="match status" value="1"/>
</dbReference>
<dbReference type="HAMAP" id="MF_01346">
    <property type="entry name" value="ATP_synth_alpha_bact"/>
    <property type="match status" value="1"/>
</dbReference>
<dbReference type="InterPro" id="IPR023366">
    <property type="entry name" value="ATP_synth_asu-like_sf"/>
</dbReference>
<dbReference type="InterPro" id="IPR000793">
    <property type="entry name" value="ATP_synth_asu_C"/>
</dbReference>
<dbReference type="InterPro" id="IPR038376">
    <property type="entry name" value="ATP_synth_asu_C_sf"/>
</dbReference>
<dbReference type="InterPro" id="IPR033732">
    <property type="entry name" value="ATP_synth_F1_a_nt-bd_dom"/>
</dbReference>
<dbReference type="InterPro" id="IPR005294">
    <property type="entry name" value="ATP_synth_F1_asu"/>
</dbReference>
<dbReference type="InterPro" id="IPR020003">
    <property type="entry name" value="ATPase_a/bsu_AS"/>
</dbReference>
<dbReference type="InterPro" id="IPR004100">
    <property type="entry name" value="ATPase_F1/V1/A1_a/bsu_N"/>
</dbReference>
<dbReference type="InterPro" id="IPR036121">
    <property type="entry name" value="ATPase_F1/V1/A1_a/bsu_N_sf"/>
</dbReference>
<dbReference type="InterPro" id="IPR000194">
    <property type="entry name" value="ATPase_F1/V1/A1_a/bsu_nucl-bd"/>
</dbReference>
<dbReference type="InterPro" id="IPR027417">
    <property type="entry name" value="P-loop_NTPase"/>
</dbReference>
<dbReference type="NCBIfam" id="TIGR00962">
    <property type="entry name" value="atpA"/>
    <property type="match status" value="1"/>
</dbReference>
<dbReference type="NCBIfam" id="NF009884">
    <property type="entry name" value="PRK13343.1"/>
    <property type="match status" value="1"/>
</dbReference>
<dbReference type="PANTHER" id="PTHR48082">
    <property type="entry name" value="ATP SYNTHASE SUBUNIT ALPHA, MITOCHONDRIAL"/>
    <property type="match status" value="1"/>
</dbReference>
<dbReference type="PANTHER" id="PTHR48082:SF2">
    <property type="entry name" value="ATP SYNTHASE SUBUNIT ALPHA, MITOCHONDRIAL"/>
    <property type="match status" value="1"/>
</dbReference>
<dbReference type="Pfam" id="PF00006">
    <property type="entry name" value="ATP-synt_ab"/>
    <property type="match status" value="1"/>
</dbReference>
<dbReference type="Pfam" id="PF00306">
    <property type="entry name" value="ATP-synt_ab_C"/>
    <property type="match status" value="1"/>
</dbReference>
<dbReference type="Pfam" id="PF02874">
    <property type="entry name" value="ATP-synt_ab_N"/>
    <property type="match status" value="1"/>
</dbReference>
<dbReference type="PIRSF" id="PIRSF039088">
    <property type="entry name" value="F_ATPase_subunit_alpha"/>
    <property type="match status" value="1"/>
</dbReference>
<dbReference type="SUPFAM" id="SSF47917">
    <property type="entry name" value="C-terminal domain of alpha and beta subunits of F1 ATP synthase"/>
    <property type="match status" value="1"/>
</dbReference>
<dbReference type="SUPFAM" id="SSF50615">
    <property type="entry name" value="N-terminal domain of alpha and beta subunits of F1 ATP synthase"/>
    <property type="match status" value="1"/>
</dbReference>
<dbReference type="SUPFAM" id="SSF52540">
    <property type="entry name" value="P-loop containing nucleoside triphosphate hydrolases"/>
    <property type="match status" value="1"/>
</dbReference>
<dbReference type="PROSITE" id="PS00152">
    <property type="entry name" value="ATPASE_ALPHA_BETA"/>
    <property type="match status" value="1"/>
</dbReference>
<accession>Q71WP7</accession>
<name>ATPA2_LISMF</name>
<gene>
    <name evidence="1" type="primary">atpA2</name>
    <name type="synonym">atpA-2</name>
    <name type="ordered locus">LMOf2365_2504</name>
</gene>
<feature type="chain" id="PRO_0000238282" description="ATP synthase subunit alpha 2">
    <location>
        <begin position="1"/>
        <end position="504"/>
    </location>
</feature>
<feature type="binding site" evidence="1">
    <location>
        <begin position="169"/>
        <end position="176"/>
    </location>
    <ligand>
        <name>ATP</name>
        <dbReference type="ChEBI" id="CHEBI:30616"/>
    </ligand>
</feature>
<feature type="site" description="Required for activity" evidence="1">
    <location>
        <position position="362"/>
    </location>
</feature>
<reference key="1">
    <citation type="journal article" date="2004" name="Nucleic Acids Res.">
        <title>Whole genome comparisons of serotype 4b and 1/2a strains of the food-borne pathogen Listeria monocytogenes reveal new insights into the core genome components of this species.</title>
        <authorList>
            <person name="Nelson K.E."/>
            <person name="Fouts D.E."/>
            <person name="Mongodin E.F."/>
            <person name="Ravel J."/>
            <person name="DeBoy R.T."/>
            <person name="Kolonay J.F."/>
            <person name="Rasko D.A."/>
            <person name="Angiuoli S.V."/>
            <person name="Gill S.R."/>
            <person name="Paulsen I.T."/>
            <person name="Peterson J.D."/>
            <person name="White O."/>
            <person name="Nelson W.C."/>
            <person name="Nierman W.C."/>
            <person name="Beanan M.J."/>
            <person name="Brinkac L.M."/>
            <person name="Daugherty S.C."/>
            <person name="Dodson R.J."/>
            <person name="Durkin A.S."/>
            <person name="Madupu R."/>
            <person name="Haft D.H."/>
            <person name="Selengut J."/>
            <person name="Van Aken S.E."/>
            <person name="Khouri H.M."/>
            <person name="Fedorova N."/>
            <person name="Forberger H.A."/>
            <person name="Tran B."/>
            <person name="Kathariou S."/>
            <person name="Wonderling L.D."/>
            <person name="Uhlich G.A."/>
            <person name="Bayles D.O."/>
            <person name="Luchansky J.B."/>
            <person name="Fraser C.M."/>
        </authorList>
    </citation>
    <scope>NUCLEOTIDE SEQUENCE [LARGE SCALE GENOMIC DNA]</scope>
    <source>
        <strain>F2365</strain>
    </source>
</reference>
<sequence>MSIKAEEISSIIKQQIENYQSELKVSDVGTVTYIGDGIARAHGLDNAMAGELLEFSNGVMGMAQNLETNDVGIIILGPYTEIREGDEVRRTGKIMEVPVGEALIGRVVNSLGQPVDGLGPIETTGTRPIEAVAPGVMQRQSVNEPLQTGIKAIDALVPIGRGQRELIIGDRQTGKTSVAIDTILNQADQDMICIYVAIGQKESTVRNAVETLRHHGALDYTIVVTAAASQPAPLLYLAPYAGVAMAEEFMYNGKHVLVVYDDLSKQAAAYRELSLLLRRPPGREAYPGDVFYLHSRLLERAAKLNDSLGGGSITALPFVETQAGDISAYIPTNVISITDGQIFLQSDLFFSGVRPAINAGLSVSRVGGSAQIKAMKTVAGTLRLDLAAYRELESFSQFGSDLDAATRAKLERGKRTVEVLKQDLHKPLKVEKQVLILYALVHKYLDDVPVHDVLRFESEMNTWFDHNHPELLEEIRTTKKLPDEAKLEAALKEFKNTFVPSEEK</sequence>
<protein>
    <recommendedName>
        <fullName evidence="1">ATP synthase subunit alpha 2</fullName>
        <ecNumber evidence="1">7.1.2.2</ecNumber>
    </recommendedName>
    <alternativeName>
        <fullName evidence="1">ATP synthase F1 sector subunit alpha 2</fullName>
    </alternativeName>
    <alternativeName>
        <fullName evidence="1">F-ATPase subunit alpha 2</fullName>
    </alternativeName>
</protein>